<evidence type="ECO:0000255" key="1">
    <source>
        <dbReference type="HAMAP-Rule" id="MF_00713"/>
    </source>
</evidence>
<name>GCSPB_PYRHO</name>
<sequence>MYRQARWDEPLIFELSRPGRVGYTLPKPIEDVKVEIPEKLKRKTPLELPEVSEPEVVKHYTRLSEMNYGVDSGIYPLGSCTMKYNPKINEEIANHPKVAFIHPYQDERTVQGALKIMWELEQWLKEITGMDRFTLQPAAGANGEFTGVMIIKAYHLDRGDTQRTEILVPDSAHGTNPASASMAGFKVVEIPSNENGTVDLEALENAVSERTAGLMLTNPNTLGIFEDEIEEIAKIVHKVGGLLYYDGANLNGILGKVRPGDMGFDIVHLNLHKTFSTPHGGGGPGAGPVGVKEFLKDYLPVPLVSYDEENDRYYLDYNVPKSIGKVKELFGNFAVLVKALTYLKIMGKEGLREVSEVAVLNANYLARKLKGTRGYELPHKELRKHEVVFSAEPMKKETGVRTLDVAKRLLDFGLHAPTIYFPLIVHEALMIEPTESVSKEELDAYVEALKKISEEAYTNPEIVKSAPHNTAVRRVDDVLAAKKPVITWKMYKELKEKGEIDY</sequence>
<accession>O57709</accession>
<gene>
    <name evidence="1" type="primary">gcvPB</name>
    <name type="ordered locus">PH1994</name>
</gene>
<keyword id="KW-0560">Oxidoreductase</keyword>
<keyword id="KW-0663">Pyridoxal phosphate</keyword>
<comment type="function">
    <text evidence="1">The glycine cleavage system catalyzes the degradation of glycine. The P protein binds the alpha-amino group of glycine through its pyridoxal phosphate cofactor; CO(2) is released and the remaining methylamine moiety is then transferred to the lipoamide cofactor of the H protein.</text>
</comment>
<comment type="catalytic activity">
    <reaction evidence="1">
        <text>N(6)-[(R)-lipoyl]-L-lysyl-[glycine-cleavage complex H protein] + glycine + H(+) = N(6)-[(R)-S(8)-aminomethyldihydrolipoyl]-L-lysyl-[glycine-cleavage complex H protein] + CO2</text>
        <dbReference type="Rhea" id="RHEA:24304"/>
        <dbReference type="Rhea" id="RHEA-COMP:10494"/>
        <dbReference type="Rhea" id="RHEA-COMP:10495"/>
        <dbReference type="ChEBI" id="CHEBI:15378"/>
        <dbReference type="ChEBI" id="CHEBI:16526"/>
        <dbReference type="ChEBI" id="CHEBI:57305"/>
        <dbReference type="ChEBI" id="CHEBI:83099"/>
        <dbReference type="ChEBI" id="CHEBI:83143"/>
        <dbReference type="EC" id="1.4.4.2"/>
    </reaction>
</comment>
<comment type="cofactor">
    <cofactor evidence="1">
        <name>pyridoxal 5'-phosphate</name>
        <dbReference type="ChEBI" id="CHEBI:597326"/>
    </cofactor>
</comment>
<comment type="subunit">
    <text evidence="1">The glycine cleavage system is composed of four proteins: P, T, L and H. In this organism, the P 'protein' is a heterodimer of two subunits.</text>
</comment>
<comment type="similarity">
    <text evidence="1">Belongs to the GcvP family. C-terminal subunit subfamily.</text>
</comment>
<feature type="chain" id="PRO_0000167029" description="Probable glycine dehydrogenase (decarboxylating) subunit 2">
    <location>
        <begin position="1"/>
        <end position="502"/>
    </location>
</feature>
<feature type="modified residue" description="N6-(pyridoxal phosphate)lysine" evidence="1">
    <location>
        <position position="273"/>
    </location>
</feature>
<organism>
    <name type="scientific">Pyrococcus horikoshii (strain ATCC 700860 / DSM 12428 / JCM 9974 / NBRC 100139 / OT-3)</name>
    <dbReference type="NCBI Taxonomy" id="70601"/>
    <lineage>
        <taxon>Archaea</taxon>
        <taxon>Methanobacteriati</taxon>
        <taxon>Methanobacteriota</taxon>
        <taxon>Thermococci</taxon>
        <taxon>Thermococcales</taxon>
        <taxon>Thermococcaceae</taxon>
        <taxon>Pyrococcus</taxon>
    </lineage>
</organism>
<dbReference type="EC" id="1.4.4.2" evidence="1"/>
<dbReference type="EMBL" id="BA000001">
    <property type="protein sequence ID" value="BAA31121.1"/>
    <property type="molecule type" value="Genomic_DNA"/>
</dbReference>
<dbReference type="PIR" id="B71216">
    <property type="entry name" value="B71216"/>
</dbReference>
<dbReference type="RefSeq" id="WP_010886055.1">
    <property type="nucleotide sequence ID" value="NC_000961.1"/>
</dbReference>
<dbReference type="SMR" id="O57709"/>
<dbReference type="STRING" id="70601.gene:9379007"/>
<dbReference type="EnsemblBacteria" id="BAA31121">
    <property type="protein sequence ID" value="BAA31121"/>
    <property type="gene ID" value="BAA31121"/>
</dbReference>
<dbReference type="GeneID" id="1442837"/>
<dbReference type="KEGG" id="pho:PH1994"/>
<dbReference type="eggNOG" id="arCOG00076">
    <property type="taxonomic scope" value="Archaea"/>
</dbReference>
<dbReference type="OrthoDB" id="371967at2157"/>
<dbReference type="Proteomes" id="UP000000752">
    <property type="component" value="Chromosome"/>
</dbReference>
<dbReference type="GO" id="GO:0005829">
    <property type="term" value="C:cytosol"/>
    <property type="evidence" value="ECO:0007669"/>
    <property type="project" value="TreeGrafter"/>
</dbReference>
<dbReference type="GO" id="GO:0005960">
    <property type="term" value="C:glycine cleavage complex"/>
    <property type="evidence" value="ECO:0007669"/>
    <property type="project" value="TreeGrafter"/>
</dbReference>
<dbReference type="GO" id="GO:0016594">
    <property type="term" value="F:glycine binding"/>
    <property type="evidence" value="ECO:0007669"/>
    <property type="project" value="TreeGrafter"/>
</dbReference>
<dbReference type="GO" id="GO:0004375">
    <property type="term" value="F:glycine dehydrogenase (decarboxylating) activity"/>
    <property type="evidence" value="ECO:0007669"/>
    <property type="project" value="UniProtKB-EC"/>
</dbReference>
<dbReference type="GO" id="GO:0030170">
    <property type="term" value="F:pyridoxal phosphate binding"/>
    <property type="evidence" value="ECO:0007669"/>
    <property type="project" value="TreeGrafter"/>
</dbReference>
<dbReference type="GO" id="GO:0019464">
    <property type="term" value="P:glycine decarboxylation via glycine cleavage system"/>
    <property type="evidence" value="ECO:0007669"/>
    <property type="project" value="UniProtKB-UniRule"/>
</dbReference>
<dbReference type="CDD" id="cd00613">
    <property type="entry name" value="GDC-P"/>
    <property type="match status" value="1"/>
</dbReference>
<dbReference type="FunFam" id="3.40.640.10:FF:000034">
    <property type="entry name" value="Probable glycine dehydrogenase (decarboxylating) subunit 2"/>
    <property type="match status" value="1"/>
</dbReference>
<dbReference type="FunFam" id="3.90.1150.10:FF:000014">
    <property type="entry name" value="Probable glycine dehydrogenase (decarboxylating) subunit 2"/>
    <property type="match status" value="1"/>
</dbReference>
<dbReference type="Gene3D" id="6.20.440.10">
    <property type="match status" value="1"/>
</dbReference>
<dbReference type="Gene3D" id="3.90.1150.10">
    <property type="entry name" value="Aspartate Aminotransferase, domain 1"/>
    <property type="match status" value="1"/>
</dbReference>
<dbReference type="Gene3D" id="3.40.640.10">
    <property type="entry name" value="Type I PLP-dependent aspartate aminotransferase-like (Major domain)"/>
    <property type="match status" value="1"/>
</dbReference>
<dbReference type="HAMAP" id="MF_00713">
    <property type="entry name" value="GcvPB"/>
    <property type="match status" value="1"/>
</dbReference>
<dbReference type="InterPro" id="IPR023012">
    <property type="entry name" value="GcvPB"/>
</dbReference>
<dbReference type="InterPro" id="IPR049316">
    <property type="entry name" value="GDC-P_C"/>
</dbReference>
<dbReference type="InterPro" id="IPR049315">
    <property type="entry name" value="GDC-P_N"/>
</dbReference>
<dbReference type="InterPro" id="IPR020581">
    <property type="entry name" value="GDC_P"/>
</dbReference>
<dbReference type="InterPro" id="IPR015424">
    <property type="entry name" value="PyrdxlP-dep_Trfase"/>
</dbReference>
<dbReference type="InterPro" id="IPR015421">
    <property type="entry name" value="PyrdxlP-dep_Trfase_major"/>
</dbReference>
<dbReference type="InterPro" id="IPR015422">
    <property type="entry name" value="PyrdxlP-dep_Trfase_small"/>
</dbReference>
<dbReference type="NCBIfam" id="NF003346">
    <property type="entry name" value="PRK04366.1"/>
    <property type="match status" value="1"/>
</dbReference>
<dbReference type="PANTHER" id="PTHR11773:SF1">
    <property type="entry name" value="GLYCINE DEHYDROGENASE (DECARBOXYLATING), MITOCHONDRIAL"/>
    <property type="match status" value="1"/>
</dbReference>
<dbReference type="PANTHER" id="PTHR11773">
    <property type="entry name" value="GLYCINE DEHYDROGENASE, DECARBOXYLATING"/>
    <property type="match status" value="1"/>
</dbReference>
<dbReference type="Pfam" id="PF21478">
    <property type="entry name" value="GcvP2_C"/>
    <property type="match status" value="1"/>
</dbReference>
<dbReference type="Pfam" id="PF02347">
    <property type="entry name" value="GDC-P"/>
    <property type="match status" value="1"/>
</dbReference>
<dbReference type="SUPFAM" id="SSF53383">
    <property type="entry name" value="PLP-dependent transferases"/>
    <property type="match status" value="1"/>
</dbReference>
<reference key="1">
    <citation type="journal article" date="1998" name="DNA Res.">
        <title>Complete sequence and gene organization of the genome of a hyper-thermophilic archaebacterium, Pyrococcus horikoshii OT3.</title>
        <authorList>
            <person name="Kawarabayasi Y."/>
            <person name="Sawada M."/>
            <person name="Horikawa H."/>
            <person name="Haikawa Y."/>
            <person name="Hino Y."/>
            <person name="Yamamoto S."/>
            <person name="Sekine M."/>
            <person name="Baba S."/>
            <person name="Kosugi H."/>
            <person name="Hosoyama A."/>
            <person name="Nagai Y."/>
            <person name="Sakai M."/>
            <person name="Ogura K."/>
            <person name="Otsuka R."/>
            <person name="Nakazawa H."/>
            <person name="Takamiya M."/>
            <person name="Ohfuku Y."/>
            <person name="Funahashi T."/>
            <person name="Tanaka T."/>
            <person name="Kudoh Y."/>
            <person name="Yamazaki J."/>
            <person name="Kushida N."/>
            <person name="Oguchi A."/>
            <person name="Aoki K."/>
            <person name="Yoshizawa T."/>
            <person name="Nakamura Y."/>
            <person name="Robb F.T."/>
            <person name="Horikoshi K."/>
            <person name="Masuchi Y."/>
            <person name="Shizuya H."/>
            <person name="Kikuchi H."/>
        </authorList>
    </citation>
    <scope>NUCLEOTIDE SEQUENCE [LARGE SCALE GENOMIC DNA]</scope>
    <source>
        <strain>ATCC 700860 / DSM 12428 / JCM 9974 / NBRC 100139 / OT-3</strain>
    </source>
</reference>
<proteinExistence type="inferred from homology"/>
<protein>
    <recommendedName>
        <fullName evidence="1">Probable glycine dehydrogenase (decarboxylating) subunit 2</fullName>
        <ecNumber evidence="1">1.4.4.2</ecNumber>
    </recommendedName>
    <alternativeName>
        <fullName evidence="1">Glycine cleavage system P-protein subunit 2</fullName>
    </alternativeName>
    <alternativeName>
        <fullName evidence="1">Glycine decarboxylase subunit 2</fullName>
    </alternativeName>
    <alternativeName>
        <fullName evidence="1">Glycine dehydrogenase (aminomethyl-transferring) subunit 2</fullName>
    </alternativeName>
</protein>